<name>CYB6_PROMA</name>
<proteinExistence type="inferred from homology"/>
<comment type="function">
    <text evidence="1">Component of the cytochrome b6-f complex, which mediates electron transfer between photosystem II (PSII) and photosystem I (PSI), cyclic electron flow around PSI, and state transitions.</text>
</comment>
<comment type="cofactor">
    <cofactor evidence="1">
        <name>heme b</name>
        <dbReference type="ChEBI" id="CHEBI:60344"/>
    </cofactor>
    <text evidence="1">Binds 2 heme b groups non-covalently with two histidine residues as axial ligands.</text>
</comment>
<comment type="cofactor">
    <cofactor evidence="1">
        <name>heme c</name>
        <dbReference type="ChEBI" id="CHEBI:61717"/>
    </cofactor>
    <text evidence="1">Binds one heme group covalently by a single cysteine link with no axial amino acid ligand. This heme was named heme ci.</text>
</comment>
<comment type="subunit">
    <text evidence="1">The 4 large subunits of the cytochrome b6-f complex are cytochrome b6, subunit IV (17 kDa polypeptide, PetD), cytochrome f and the Rieske protein, while the 4 small subunits are PetG, PetL, PetM and PetN. The complex functions as a dimer.</text>
</comment>
<comment type="subcellular location">
    <subcellularLocation>
        <location evidence="1">Cellular thylakoid membrane</location>
        <topology evidence="1">Multi-pass membrane protein</topology>
    </subcellularLocation>
</comment>
<comment type="miscellaneous">
    <text evidence="1">Heme 1 (or BH or b566) is high-potential and absorbs at about 566 nm, and heme 2 (or BL or b562) is low-potential and absorbs at about 562 nm.</text>
</comment>
<comment type="similarity">
    <text evidence="1">Belongs to the cytochrome b family. PetB subfamily.</text>
</comment>
<sequence>MANSSPVYDWFQERLEIQDIADDVTSKYVPPHVNIFYCLGGITLVCFLIQFATGFAMTFYYKPTVTEAYNSVSYLMTDVSFGWLIRSVHRWSASMMVLMLILHVFRVYLTGGFKRPRELTWVTGVVMAVITVAFGVTGYSLPWDQVGYWAVKIVSGVPAAIPVVGDFMVELLRGGESVGQTTLTRFYSLHTFVLPWTLAIFMLMHFLMIRKQGISGPL</sequence>
<gene>
    <name evidence="1" type="primary">petB</name>
    <name type="ordered locus">Pro_0367</name>
</gene>
<accession>Q7VDK9</accession>
<evidence type="ECO:0000255" key="1">
    <source>
        <dbReference type="HAMAP-Rule" id="MF_00633"/>
    </source>
</evidence>
<reference key="1">
    <citation type="journal article" date="2003" name="Proc. Natl. Acad. Sci. U.S.A.">
        <title>Genome sequence of the cyanobacterium Prochlorococcus marinus SS120, a nearly minimal oxyphototrophic genome.</title>
        <authorList>
            <person name="Dufresne A."/>
            <person name="Salanoubat M."/>
            <person name="Partensky F."/>
            <person name="Artiguenave F."/>
            <person name="Axmann I.M."/>
            <person name="Barbe V."/>
            <person name="Duprat S."/>
            <person name="Galperin M.Y."/>
            <person name="Koonin E.V."/>
            <person name="Le Gall F."/>
            <person name="Makarova K.S."/>
            <person name="Ostrowski M."/>
            <person name="Oztas S."/>
            <person name="Robert C."/>
            <person name="Rogozin I.B."/>
            <person name="Scanlan D.J."/>
            <person name="Tandeau de Marsac N."/>
            <person name="Weissenbach J."/>
            <person name="Wincker P."/>
            <person name="Wolf Y.I."/>
            <person name="Hess W.R."/>
        </authorList>
    </citation>
    <scope>NUCLEOTIDE SEQUENCE [LARGE SCALE GENOMIC DNA]</scope>
    <source>
        <strain>SARG / CCMP1375 / SS120</strain>
    </source>
</reference>
<keyword id="KW-0249">Electron transport</keyword>
<keyword id="KW-0349">Heme</keyword>
<keyword id="KW-0408">Iron</keyword>
<keyword id="KW-0472">Membrane</keyword>
<keyword id="KW-0479">Metal-binding</keyword>
<keyword id="KW-0602">Photosynthesis</keyword>
<keyword id="KW-1185">Reference proteome</keyword>
<keyword id="KW-0793">Thylakoid</keyword>
<keyword id="KW-0812">Transmembrane</keyword>
<keyword id="KW-1133">Transmembrane helix</keyword>
<keyword id="KW-0813">Transport</keyword>
<dbReference type="EMBL" id="AE017126">
    <property type="protein sequence ID" value="AAP99413.1"/>
    <property type="molecule type" value="Genomic_DNA"/>
</dbReference>
<dbReference type="RefSeq" id="NP_874761.1">
    <property type="nucleotide sequence ID" value="NC_005042.1"/>
</dbReference>
<dbReference type="RefSeq" id="WP_011124522.1">
    <property type="nucleotide sequence ID" value="NC_005042.1"/>
</dbReference>
<dbReference type="SMR" id="Q7VDK9"/>
<dbReference type="STRING" id="167539.Pro_0367"/>
<dbReference type="EnsemblBacteria" id="AAP99413">
    <property type="protein sequence ID" value="AAP99413"/>
    <property type="gene ID" value="Pro_0367"/>
</dbReference>
<dbReference type="KEGG" id="pma:Pro_0367"/>
<dbReference type="PATRIC" id="fig|167539.5.peg.375"/>
<dbReference type="eggNOG" id="COG1290">
    <property type="taxonomic scope" value="Bacteria"/>
</dbReference>
<dbReference type="HOGENOM" id="CLU_031114_0_2_3"/>
<dbReference type="OrthoDB" id="9804503at2"/>
<dbReference type="Proteomes" id="UP000001420">
    <property type="component" value="Chromosome"/>
</dbReference>
<dbReference type="GO" id="GO:0031676">
    <property type="term" value="C:plasma membrane-derived thylakoid membrane"/>
    <property type="evidence" value="ECO:0007669"/>
    <property type="project" value="UniProtKB-SubCell"/>
</dbReference>
<dbReference type="GO" id="GO:0045158">
    <property type="term" value="F:electron transporter, transferring electrons within cytochrome b6/f complex of photosystem II activity"/>
    <property type="evidence" value="ECO:0007669"/>
    <property type="project" value="UniProtKB-UniRule"/>
</dbReference>
<dbReference type="GO" id="GO:0046872">
    <property type="term" value="F:metal ion binding"/>
    <property type="evidence" value="ECO:0007669"/>
    <property type="project" value="UniProtKB-KW"/>
</dbReference>
<dbReference type="GO" id="GO:0016491">
    <property type="term" value="F:oxidoreductase activity"/>
    <property type="evidence" value="ECO:0007669"/>
    <property type="project" value="InterPro"/>
</dbReference>
<dbReference type="GO" id="GO:0015979">
    <property type="term" value="P:photosynthesis"/>
    <property type="evidence" value="ECO:0007669"/>
    <property type="project" value="UniProtKB-UniRule"/>
</dbReference>
<dbReference type="GO" id="GO:0022904">
    <property type="term" value="P:respiratory electron transport chain"/>
    <property type="evidence" value="ECO:0007669"/>
    <property type="project" value="InterPro"/>
</dbReference>
<dbReference type="CDD" id="cd00284">
    <property type="entry name" value="Cytochrome_b_N"/>
    <property type="match status" value="1"/>
</dbReference>
<dbReference type="FunFam" id="1.20.810.10:FF:000001">
    <property type="entry name" value="Cytochrome b6"/>
    <property type="match status" value="1"/>
</dbReference>
<dbReference type="Gene3D" id="1.20.810.10">
    <property type="entry name" value="Cytochrome Bc1 Complex, Chain C"/>
    <property type="match status" value="1"/>
</dbReference>
<dbReference type="HAMAP" id="MF_00633">
    <property type="entry name" value="Cytb6_f_cytb6"/>
    <property type="match status" value="1"/>
</dbReference>
<dbReference type="InterPro" id="IPR005797">
    <property type="entry name" value="Cyt_b/b6_N"/>
</dbReference>
<dbReference type="InterPro" id="IPR023530">
    <property type="entry name" value="Cyt_B6_PetB"/>
</dbReference>
<dbReference type="InterPro" id="IPR027387">
    <property type="entry name" value="Cytb/b6-like_sf"/>
</dbReference>
<dbReference type="InterPro" id="IPR048259">
    <property type="entry name" value="Cytochrome_b_N_euk/bac"/>
</dbReference>
<dbReference type="InterPro" id="IPR016174">
    <property type="entry name" value="Di-haem_cyt_TM"/>
</dbReference>
<dbReference type="NCBIfam" id="NF002990">
    <property type="entry name" value="PRK03735.1"/>
    <property type="match status" value="1"/>
</dbReference>
<dbReference type="PANTHER" id="PTHR19271">
    <property type="entry name" value="CYTOCHROME B"/>
    <property type="match status" value="1"/>
</dbReference>
<dbReference type="PANTHER" id="PTHR19271:SF16">
    <property type="entry name" value="CYTOCHROME B"/>
    <property type="match status" value="1"/>
</dbReference>
<dbReference type="Pfam" id="PF00033">
    <property type="entry name" value="Cytochrome_B"/>
    <property type="match status" value="1"/>
</dbReference>
<dbReference type="PIRSF" id="PIRSF000032">
    <property type="entry name" value="Cytochrome_b6"/>
    <property type="match status" value="1"/>
</dbReference>
<dbReference type="SUPFAM" id="SSF81342">
    <property type="entry name" value="Transmembrane di-heme cytochromes"/>
    <property type="match status" value="1"/>
</dbReference>
<dbReference type="PROSITE" id="PS51002">
    <property type="entry name" value="CYTB_NTER"/>
    <property type="match status" value="1"/>
</dbReference>
<organism>
    <name type="scientific">Prochlorococcus marinus (strain SARG / CCMP1375 / SS120)</name>
    <dbReference type="NCBI Taxonomy" id="167539"/>
    <lineage>
        <taxon>Bacteria</taxon>
        <taxon>Bacillati</taxon>
        <taxon>Cyanobacteriota</taxon>
        <taxon>Cyanophyceae</taxon>
        <taxon>Synechococcales</taxon>
        <taxon>Prochlorococcaceae</taxon>
        <taxon>Prochlorococcus</taxon>
    </lineage>
</organism>
<protein>
    <recommendedName>
        <fullName evidence="1">Cytochrome b6</fullName>
    </recommendedName>
</protein>
<feature type="chain" id="PRO_0000061830" description="Cytochrome b6">
    <location>
        <begin position="1"/>
        <end position="218"/>
    </location>
</feature>
<feature type="transmembrane region" description="Helical" evidence="1">
    <location>
        <begin position="35"/>
        <end position="55"/>
    </location>
</feature>
<feature type="transmembrane region" description="Helical" evidence="1">
    <location>
        <begin position="93"/>
        <end position="113"/>
    </location>
</feature>
<feature type="transmembrane region" description="Helical" evidence="1">
    <location>
        <begin position="119"/>
        <end position="139"/>
    </location>
</feature>
<feature type="transmembrane region" description="Helical" evidence="1">
    <location>
        <begin position="189"/>
        <end position="209"/>
    </location>
</feature>
<feature type="binding site" description="covalent" evidence="1">
    <location>
        <position position="38"/>
    </location>
    <ligand>
        <name>heme c</name>
        <dbReference type="ChEBI" id="CHEBI:61717"/>
    </ligand>
</feature>
<feature type="binding site" description="axial binding residue" evidence="1">
    <location>
        <position position="89"/>
    </location>
    <ligand>
        <name>heme b</name>
        <dbReference type="ChEBI" id="CHEBI:60344"/>
        <label>2</label>
    </ligand>
    <ligandPart>
        <name>Fe</name>
        <dbReference type="ChEBI" id="CHEBI:18248"/>
    </ligandPart>
</feature>
<feature type="binding site" description="axial binding residue" evidence="1">
    <location>
        <position position="103"/>
    </location>
    <ligand>
        <name>heme b</name>
        <dbReference type="ChEBI" id="CHEBI:60344"/>
        <label>1</label>
    </ligand>
    <ligandPart>
        <name>Fe</name>
        <dbReference type="ChEBI" id="CHEBI:18248"/>
    </ligandPart>
</feature>
<feature type="binding site" description="axial binding residue" evidence="1">
    <location>
        <position position="190"/>
    </location>
    <ligand>
        <name>heme b</name>
        <dbReference type="ChEBI" id="CHEBI:60344"/>
        <label>2</label>
    </ligand>
    <ligandPart>
        <name>Fe</name>
        <dbReference type="ChEBI" id="CHEBI:18248"/>
    </ligandPart>
</feature>
<feature type="binding site" description="axial binding residue" evidence="1">
    <location>
        <position position="205"/>
    </location>
    <ligand>
        <name>heme b</name>
        <dbReference type="ChEBI" id="CHEBI:60344"/>
        <label>1</label>
    </ligand>
    <ligandPart>
        <name>Fe</name>
        <dbReference type="ChEBI" id="CHEBI:18248"/>
    </ligandPart>
</feature>